<comment type="function">
    <text evidence="2">GTP hydrolase that promotes the GTP-dependent binding of aminoacyl-tRNA to the A-site of ribosomes during protein biosynthesis.</text>
</comment>
<comment type="catalytic activity">
    <reaction evidence="2">
        <text>GTP + H2O = GDP + phosphate + H(+)</text>
        <dbReference type="Rhea" id="RHEA:19669"/>
        <dbReference type="ChEBI" id="CHEBI:15377"/>
        <dbReference type="ChEBI" id="CHEBI:15378"/>
        <dbReference type="ChEBI" id="CHEBI:37565"/>
        <dbReference type="ChEBI" id="CHEBI:43474"/>
        <dbReference type="ChEBI" id="CHEBI:58189"/>
        <dbReference type="EC" id="3.6.5.3"/>
    </reaction>
    <physiologicalReaction direction="left-to-right" evidence="2">
        <dbReference type="Rhea" id="RHEA:19670"/>
    </physiologicalReaction>
</comment>
<comment type="subunit">
    <text evidence="2">Monomer.</text>
</comment>
<comment type="subcellular location">
    <subcellularLocation>
        <location evidence="2">Cytoplasm</location>
    </subcellularLocation>
</comment>
<comment type="similarity">
    <text evidence="2">Belongs to the TRAFAC class translation factor GTPase superfamily. Classic translation factor GTPase family. EF-Tu/EF-1A subfamily.</text>
</comment>
<dbReference type="EC" id="3.6.5.3" evidence="2"/>
<dbReference type="EMBL" id="CP000387">
    <property type="protein sequence ID" value="ABN44914.1"/>
    <property type="molecule type" value="Genomic_DNA"/>
</dbReference>
<dbReference type="RefSeq" id="WP_002895003.1">
    <property type="nucleotide sequence ID" value="NZ_CAXTYR010000001.1"/>
</dbReference>
<dbReference type="RefSeq" id="YP_001035464.1">
    <property type="nucleotide sequence ID" value="NC_009009.1"/>
</dbReference>
<dbReference type="SMR" id="A3CP09"/>
<dbReference type="STRING" id="388919.SSA_1520"/>
<dbReference type="GeneID" id="48425894"/>
<dbReference type="KEGG" id="ssa:SSA_1520"/>
<dbReference type="PATRIC" id="fig|388919.9.peg.1444"/>
<dbReference type="eggNOG" id="COG0050">
    <property type="taxonomic scope" value="Bacteria"/>
</dbReference>
<dbReference type="HOGENOM" id="CLU_007265_0_1_9"/>
<dbReference type="OrthoDB" id="9804504at2"/>
<dbReference type="Proteomes" id="UP000002148">
    <property type="component" value="Chromosome"/>
</dbReference>
<dbReference type="GO" id="GO:0005829">
    <property type="term" value="C:cytosol"/>
    <property type="evidence" value="ECO:0007669"/>
    <property type="project" value="TreeGrafter"/>
</dbReference>
<dbReference type="GO" id="GO:0005525">
    <property type="term" value="F:GTP binding"/>
    <property type="evidence" value="ECO:0007669"/>
    <property type="project" value="UniProtKB-UniRule"/>
</dbReference>
<dbReference type="GO" id="GO:0003924">
    <property type="term" value="F:GTPase activity"/>
    <property type="evidence" value="ECO:0007669"/>
    <property type="project" value="InterPro"/>
</dbReference>
<dbReference type="GO" id="GO:0003746">
    <property type="term" value="F:translation elongation factor activity"/>
    <property type="evidence" value="ECO:0007669"/>
    <property type="project" value="UniProtKB-UniRule"/>
</dbReference>
<dbReference type="CDD" id="cd01884">
    <property type="entry name" value="EF_Tu"/>
    <property type="match status" value="1"/>
</dbReference>
<dbReference type="CDD" id="cd03697">
    <property type="entry name" value="EFTU_II"/>
    <property type="match status" value="1"/>
</dbReference>
<dbReference type="CDD" id="cd03707">
    <property type="entry name" value="EFTU_III"/>
    <property type="match status" value="1"/>
</dbReference>
<dbReference type="FunFam" id="2.40.30.10:FF:000001">
    <property type="entry name" value="Elongation factor Tu"/>
    <property type="match status" value="1"/>
</dbReference>
<dbReference type="FunFam" id="3.40.50.300:FF:000003">
    <property type="entry name" value="Elongation factor Tu"/>
    <property type="match status" value="1"/>
</dbReference>
<dbReference type="Gene3D" id="3.40.50.300">
    <property type="entry name" value="P-loop containing nucleotide triphosphate hydrolases"/>
    <property type="match status" value="1"/>
</dbReference>
<dbReference type="Gene3D" id="2.40.30.10">
    <property type="entry name" value="Translation factors"/>
    <property type="match status" value="2"/>
</dbReference>
<dbReference type="HAMAP" id="MF_00118_B">
    <property type="entry name" value="EF_Tu_B"/>
    <property type="match status" value="1"/>
</dbReference>
<dbReference type="InterPro" id="IPR041709">
    <property type="entry name" value="EF-Tu_GTP-bd"/>
</dbReference>
<dbReference type="InterPro" id="IPR050055">
    <property type="entry name" value="EF-Tu_GTPase"/>
</dbReference>
<dbReference type="InterPro" id="IPR004161">
    <property type="entry name" value="EFTu-like_2"/>
</dbReference>
<dbReference type="InterPro" id="IPR033720">
    <property type="entry name" value="EFTU_2"/>
</dbReference>
<dbReference type="InterPro" id="IPR031157">
    <property type="entry name" value="G_TR_CS"/>
</dbReference>
<dbReference type="InterPro" id="IPR027417">
    <property type="entry name" value="P-loop_NTPase"/>
</dbReference>
<dbReference type="InterPro" id="IPR005225">
    <property type="entry name" value="Small_GTP-bd"/>
</dbReference>
<dbReference type="InterPro" id="IPR000795">
    <property type="entry name" value="T_Tr_GTP-bd_dom"/>
</dbReference>
<dbReference type="InterPro" id="IPR009000">
    <property type="entry name" value="Transl_B-barrel_sf"/>
</dbReference>
<dbReference type="InterPro" id="IPR009001">
    <property type="entry name" value="Transl_elong_EF1A/Init_IF2_C"/>
</dbReference>
<dbReference type="InterPro" id="IPR004541">
    <property type="entry name" value="Transl_elong_EFTu/EF1A_bac/org"/>
</dbReference>
<dbReference type="InterPro" id="IPR004160">
    <property type="entry name" value="Transl_elong_EFTu/EF1A_C"/>
</dbReference>
<dbReference type="NCBIfam" id="TIGR00485">
    <property type="entry name" value="EF-Tu"/>
    <property type="match status" value="1"/>
</dbReference>
<dbReference type="NCBIfam" id="NF000766">
    <property type="entry name" value="PRK00049.1"/>
    <property type="match status" value="1"/>
</dbReference>
<dbReference type="NCBIfam" id="NF009372">
    <property type="entry name" value="PRK12735.1"/>
    <property type="match status" value="1"/>
</dbReference>
<dbReference type="NCBIfam" id="NF009373">
    <property type="entry name" value="PRK12736.1"/>
    <property type="match status" value="1"/>
</dbReference>
<dbReference type="NCBIfam" id="TIGR00231">
    <property type="entry name" value="small_GTP"/>
    <property type="match status" value="1"/>
</dbReference>
<dbReference type="PANTHER" id="PTHR43721:SF22">
    <property type="entry name" value="ELONGATION FACTOR TU, MITOCHONDRIAL"/>
    <property type="match status" value="1"/>
</dbReference>
<dbReference type="PANTHER" id="PTHR43721">
    <property type="entry name" value="ELONGATION FACTOR TU-RELATED"/>
    <property type="match status" value="1"/>
</dbReference>
<dbReference type="Pfam" id="PF00009">
    <property type="entry name" value="GTP_EFTU"/>
    <property type="match status" value="1"/>
</dbReference>
<dbReference type="Pfam" id="PF03144">
    <property type="entry name" value="GTP_EFTU_D2"/>
    <property type="match status" value="1"/>
</dbReference>
<dbReference type="Pfam" id="PF03143">
    <property type="entry name" value="GTP_EFTU_D3"/>
    <property type="match status" value="1"/>
</dbReference>
<dbReference type="PRINTS" id="PR00315">
    <property type="entry name" value="ELONGATNFCT"/>
</dbReference>
<dbReference type="SUPFAM" id="SSF50465">
    <property type="entry name" value="EF-Tu/eEF-1alpha/eIF2-gamma C-terminal domain"/>
    <property type="match status" value="1"/>
</dbReference>
<dbReference type="SUPFAM" id="SSF52540">
    <property type="entry name" value="P-loop containing nucleoside triphosphate hydrolases"/>
    <property type="match status" value="1"/>
</dbReference>
<dbReference type="SUPFAM" id="SSF50447">
    <property type="entry name" value="Translation proteins"/>
    <property type="match status" value="1"/>
</dbReference>
<dbReference type="PROSITE" id="PS00301">
    <property type="entry name" value="G_TR_1"/>
    <property type="match status" value="1"/>
</dbReference>
<dbReference type="PROSITE" id="PS51722">
    <property type="entry name" value="G_TR_2"/>
    <property type="match status" value="1"/>
</dbReference>
<sequence>MAKEKYDRSKPHVNIGTIGHVDHGKTTLTAAITTVLARRLPSAVNQPKDYASIDAAPEERERGITINTAHVEYETAKRHYAHIDAPGHADYVKNMITGAAQMDGAILVVASTDGPMPQTREHILLSRQVGVKHLIVFMNKVDLVDDEELLELVEMEIRDLLSEYDFPGDDLPVIQGSALKALEGDSKYEDIIMELMDTVDEYIPEPERDTDKPLLLPVEDVFSITGRGTVASGRIDRGIVKVNDEIEIVGIKEEIQKAVVTGVEMFRKQLDEGLAGDNVGVLLRGIQRDEIERGQVIAKPGSINPHTKFKGEVYILTKEEGGRHTPFFNNYRPQFYFRTTDVTGSIELPAGTEMVMPGDNVTIDVELIHPIAVEQGTTFSIREGGRTVGSGMVTEIEA</sequence>
<keyword id="KW-0963">Cytoplasm</keyword>
<keyword id="KW-0251">Elongation factor</keyword>
<keyword id="KW-0342">GTP-binding</keyword>
<keyword id="KW-0378">Hydrolase</keyword>
<keyword id="KW-0460">Magnesium</keyword>
<keyword id="KW-0479">Metal-binding</keyword>
<keyword id="KW-0547">Nucleotide-binding</keyword>
<keyword id="KW-0648">Protein biosynthesis</keyword>
<keyword id="KW-1185">Reference proteome</keyword>
<evidence type="ECO:0000250" key="1"/>
<evidence type="ECO:0000255" key="2">
    <source>
        <dbReference type="HAMAP-Rule" id="MF_00118"/>
    </source>
</evidence>
<proteinExistence type="inferred from homology"/>
<organism>
    <name type="scientific">Streptococcus sanguinis (strain SK36)</name>
    <dbReference type="NCBI Taxonomy" id="388919"/>
    <lineage>
        <taxon>Bacteria</taxon>
        <taxon>Bacillati</taxon>
        <taxon>Bacillota</taxon>
        <taxon>Bacilli</taxon>
        <taxon>Lactobacillales</taxon>
        <taxon>Streptococcaceae</taxon>
        <taxon>Streptococcus</taxon>
    </lineage>
</organism>
<name>EFTU_STRSV</name>
<accession>A3CP09</accession>
<protein>
    <recommendedName>
        <fullName evidence="2">Elongation factor Tu</fullName>
        <shortName evidence="2">EF-Tu</shortName>
        <ecNumber evidence="2">3.6.5.3</ecNumber>
    </recommendedName>
</protein>
<feature type="chain" id="PRO_1000015760" description="Elongation factor Tu">
    <location>
        <begin position="1"/>
        <end position="398"/>
    </location>
</feature>
<feature type="domain" description="tr-type G">
    <location>
        <begin position="10"/>
        <end position="207"/>
    </location>
</feature>
<feature type="region of interest" description="G1" evidence="1">
    <location>
        <begin position="19"/>
        <end position="26"/>
    </location>
</feature>
<feature type="region of interest" description="G2" evidence="1">
    <location>
        <begin position="63"/>
        <end position="67"/>
    </location>
</feature>
<feature type="region of interest" description="G3" evidence="1">
    <location>
        <begin position="84"/>
        <end position="87"/>
    </location>
</feature>
<feature type="region of interest" description="G4" evidence="1">
    <location>
        <begin position="139"/>
        <end position="142"/>
    </location>
</feature>
<feature type="region of interest" description="G5" evidence="1">
    <location>
        <begin position="177"/>
        <end position="179"/>
    </location>
</feature>
<feature type="binding site" evidence="2">
    <location>
        <begin position="19"/>
        <end position="26"/>
    </location>
    <ligand>
        <name>GTP</name>
        <dbReference type="ChEBI" id="CHEBI:37565"/>
    </ligand>
</feature>
<feature type="binding site" evidence="2">
    <location>
        <position position="26"/>
    </location>
    <ligand>
        <name>Mg(2+)</name>
        <dbReference type="ChEBI" id="CHEBI:18420"/>
    </ligand>
</feature>
<feature type="binding site" evidence="2">
    <location>
        <begin position="84"/>
        <end position="88"/>
    </location>
    <ligand>
        <name>GTP</name>
        <dbReference type="ChEBI" id="CHEBI:37565"/>
    </ligand>
</feature>
<feature type="binding site" evidence="2">
    <location>
        <begin position="139"/>
        <end position="142"/>
    </location>
    <ligand>
        <name>GTP</name>
        <dbReference type="ChEBI" id="CHEBI:37565"/>
    </ligand>
</feature>
<gene>
    <name evidence="2" type="primary">tuf</name>
    <name type="ordered locus">SSA_1520</name>
</gene>
<reference key="1">
    <citation type="journal article" date="2007" name="J. Bacteriol.">
        <title>Genome of the opportunistic pathogen Streptococcus sanguinis.</title>
        <authorList>
            <person name="Xu P."/>
            <person name="Alves J.M."/>
            <person name="Kitten T."/>
            <person name="Brown A."/>
            <person name="Chen Z."/>
            <person name="Ozaki L.S."/>
            <person name="Manque P."/>
            <person name="Ge X."/>
            <person name="Serrano M.G."/>
            <person name="Puiu D."/>
            <person name="Hendricks S."/>
            <person name="Wang Y."/>
            <person name="Chaplin M.D."/>
            <person name="Akan D."/>
            <person name="Paik S."/>
            <person name="Peterson D.L."/>
            <person name="Macrina F.L."/>
            <person name="Buck G.A."/>
        </authorList>
    </citation>
    <scope>NUCLEOTIDE SEQUENCE [LARGE SCALE GENOMIC DNA]</scope>
    <source>
        <strain>SK36</strain>
    </source>
</reference>